<sequence>MSWQDKIAQGLQRRRDAAAYRTRQVNEGANGRWLQSGERQYLNFSSNDYLGLSQNDEVIAAWQQGARRYGVGSGGSGHVTGYSQPHARLEQQLADWLGYPRALLFISGYAANQAVLTALTDADDRILADKLSHASLLEAAAHSPAQLRRFQHNQPEALQNLLIKPCQGQTLVVTEGVFSMDGDSAPLAALQQQTSAAGGWLLVDDAHGIGVHGEGGRGSCWLQGVQPELLVVTFGKAFGLSGAAVLCQEPVAEYLLQYARHLIYSTAMPPAQACALQAALRQVQQGDALRQQLQQRIRQFRTAAAHLPLQLGASKTAIQPLLVGDNQQSLIWAEQLRAAGLWVTAIRPPTVPPGSARLRITLSAAHQPEDIDRLLEVLYGLCH</sequence>
<gene>
    <name evidence="1" type="primary">bioF</name>
    <name type="ordered locus">YpAngola_A1426</name>
</gene>
<proteinExistence type="inferred from homology"/>
<dbReference type="EC" id="2.3.1.47" evidence="1"/>
<dbReference type="EMBL" id="CP000901">
    <property type="protein sequence ID" value="ABX86570.1"/>
    <property type="molecule type" value="Genomic_DNA"/>
</dbReference>
<dbReference type="RefSeq" id="WP_002210763.1">
    <property type="nucleotide sequence ID" value="NZ_CP009935.1"/>
</dbReference>
<dbReference type="SMR" id="A9R3C9"/>
<dbReference type="GeneID" id="57977291"/>
<dbReference type="KEGG" id="ypg:YpAngola_A1426"/>
<dbReference type="PATRIC" id="fig|349746.12.peg.2392"/>
<dbReference type="UniPathway" id="UPA00078"/>
<dbReference type="GO" id="GO:0008710">
    <property type="term" value="F:8-amino-7-oxononanoate synthase activity"/>
    <property type="evidence" value="ECO:0007669"/>
    <property type="project" value="UniProtKB-UniRule"/>
</dbReference>
<dbReference type="GO" id="GO:0030170">
    <property type="term" value="F:pyridoxal phosphate binding"/>
    <property type="evidence" value="ECO:0007669"/>
    <property type="project" value="UniProtKB-UniRule"/>
</dbReference>
<dbReference type="GO" id="GO:0009102">
    <property type="term" value="P:biotin biosynthetic process"/>
    <property type="evidence" value="ECO:0007669"/>
    <property type="project" value="UniProtKB-UniRule"/>
</dbReference>
<dbReference type="Gene3D" id="3.90.1150.10">
    <property type="entry name" value="Aspartate Aminotransferase, domain 1"/>
    <property type="match status" value="1"/>
</dbReference>
<dbReference type="Gene3D" id="3.40.640.10">
    <property type="entry name" value="Type I PLP-dependent aspartate aminotransferase-like (Major domain)"/>
    <property type="match status" value="1"/>
</dbReference>
<dbReference type="HAMAP" id="MF_01693">
    <property type="entry name" value="BioF_aminotrans_2"/>
    <property type="match status" value="1"/>
</dbReference>
<dbReference type="InterPro" id="IPR001917">
    <property type="entry name" value="Aminotrans_II_pyridoxalP_BS"/>
</dbReference>
<dbReference type="InterPro" id="IPR004839">
    <property type="entry name" value="Aminotransferase_I/II_large"/>
</dbReference>
<dbReference type="InterPro" id="IPR050087">
    <property type="entry name" value="AON_synthase_class-II"/>
</dbReference>
<dbReference type="InterPro" id="IPR004723">
    <property type="entry name" value="AONS_Archaea/Proteobacteria"/>
</dbReference>
<dbReference type="InterPro" id="IPR022834">
    <property type="entry name" value="AONS_Proteobacteria"/>
</dbReference>
<dbReference type="InterPro" id="IPR015424">
    <property type="entry name" value="PyrdxlP-dep_Trfase"/>
</dbReference>
<dbReference type="InterPro" id="IPR015421">
    <property type="entry name" value="PyrdxlP-dep_Trfase_major"/>
</dbReference>
<dbReference type="InterPro" id="IPR015422">
    <property type="entry name" value="PyrdxlP-dep_Trfase_small"/>
</dbReference>
<dbReference type="NCBIfam" id="TIGR00858">
    <property type="entry name" value="bioF"/>
    <property type="match status" value="1"/>
</dbReference>
<dbReference type="PANTHER" id="PTHR13693:SF100">
    <property type="entry name" value="8-AMINO-7-OXONONANOATE SYNTHASE"/>
    <property type="match status" value="1"/>
</dbReference>
<dbReference type="PANTHER" id="PTHR13693">
    <property type="entry name" value="CLASS II AMINOTRANSFERASE/8-AMINO-7-OXONONANOATE SYNTHASE"/>
    <property type="match status" value="1"/>
</dbReference>
<dbReference type="Pfam" id="PF00155">
    <property type="entry name" value="Aminotran_1_2"/>
    <property type="match status" value="1"/>
</dbReference>
<dbReference type="SUPFAM" id="SSF53383">
    <property type="entry name" value="PLP-dependent transferases"/>
    <property type="match status" value="1"/>
</dbReference>
<dbReference type="PROSITE" id="PS00599">
    <property type="entry name" value="AA_TRANSFER_CLASS_2"/>
    <property type="match status" value="1"/>
</dbReference>
<comment type="function">
    <text evidence="1">Catalyzes the decarboxylative condensation of pimeloyl-[acyl-carrier protein] and L-alanine to produce 8-amino-7-oxononanoate (AON), [acyl-carrier protein], and carbon dioxide.</text>
</comment>
<comment type="catalytic activity">
    <reaction evidence="1">
        <text>6-carboxyhexanoyl-[ACP] + L-alanine + H(+) = (8S)-8-amino-7-oxononanoate + holo-[ACP] + CO2</text>
        <dbReference type="Rhea" id="RHEA:42288"/>
        <dbReference type="Rhea" id="RHEA-COMP:9685"/>
        <dbReference type="Rhea" id="RHEA-COMP:9955"/>
        <dbReference type="ChEBI" id="CHEBI:15378"/>
        <dbReference type="ChEBI" id="CHEBI:16526"/>
        <dbReference type="ChEBI" id="CHEBI:57972"/>
        <dbReference type="ChEBI" id="CHEBI:64479"/>
        <dbReference type="ChEBI" id="CHEBI:78846"/>
        <dbReference type="ChEBI" id="CHEBI:149468"/>
        <dbReference type="EC" id="2.3.1.47"/>
    </reaction>
</comment>
<comment type="cofactor">
    <cofactor evidence="1">
        <name>pyridoxal 5'-phosphate</name>
        <dbReference type="ChEBI" id="CHEBI:597326"/>
    </cofactor>
</comment>
<comment type="pathway">
    <text evidence="1">Cofactor biosynthesis; biotin biosynthesis.</text>
</comment>
<comment type="subunit">
    <text evidence="1">Homodimer.</text>
</comment>
<comment type="similarity">
    <text evidence="1">Belongs to the class-II pyridoxal-phosphate-dependent aminotransferase family. BioF subfamily.</text>
</comment>
<accession>A9R3C9</accession>
<evidence type="ECO:0000255" key="1">
    <source>
        <dbReference type="HAMAP-Rule" id="MF_01693"/>
    </source>
</evidence>
<feature type="chain" id="PRO_0000381157" description="8-amino-7-oxononanoate synthase">
    <location>
        <begin position="1"/>
        <end position="383"/>
    </location>
</feature>
<feature type="binding site" evidence="1">
    <location>
        <position position="21"/>
    </location>
    <ligand>
        <name>substrate</name>
    </ligand>
</feature>
<feature type="binding site" evidence="1">
    <location>
        <begin position="108"/>
        <end position="109"/>
    </location>
    <ligand>
        <name>pyridoxal 5'-phosphate</name>
        <dbReference type="ChEBI" id="CHEBI:597326"/>
    </ligand>
</feature>
<feature type="binding site" evidence="1">
    <location>
        <position position="133"/>
    </location>
    <ligand>
        <name>substrate</name>
    </ligand>
</feature>
<feature type="binding site" evidence="1">
    <location>
        <position position="179"/>
    </location>
    <ligand>
        <name>pyridoxal 5'-phosphate</name>
        <dbReference type="ChEBI" id="CHEBI:597326"/>
    </ligand>
</feature>
<feature type="binding site" evidence="1">
    <location>
        <position position="207"/>
    </location>
    <ligand>
        <name>pyridoxal 5'-phosphate</name>
        <dbReference type="ChEBI" id="CHEBI:597326"/>
    </ligand>
</feature>
<feature type="binding site" evidence="1">
    <location>
        <position position="233"/>
    </location>
    <ligand>
        <name>pyridoxal 5'-phosphate</name>
        <dbReference type="ChEBI" id="CHEBI:597326"/>
    </ligand>
</feature>
<feature type="binding site" evidence="1">
    <location>
        <position position="350"/>
    </location>
    <ligand>
        <name>substrate</name>
    </ligand>
</feature>
<feature type="modified residue" description="N6-(pyridoxal phosphate)lysine" evidence="1">
    <location>
        <position position="236"/>
    </location>
</feature>
<protein>
    <recommendedName>
        <fullName evidence="1">8-amino-7-oxononanoate synthase</fullName>
        <shortName evidence="1">AONS</shortName>
        <ecNumber evidence="1">2.3.1.47</ecNumber>
    </recommendedName>
    <alternativeName>
        <fullName evidence="1">7-keto-8-amino-pelargonic acid synthase</fullName>
        <shortName evidence="1">7-KAP synthase</shortName>
        <shortName evidence="1">KAPA synthase</shortName>
    </alternativeName>
    <alternativeName>
        <fullName evidence="1">8-amino-7-ketopelargonate synthase</fullName>
    </alternativeName>
</protein>
<name>BIOF_YERPG</name>
<organism>
    <name type="scientific">Yersinia pestis bv. Antiqua (strain Angola)</name>
    <dbReference type="NCBI Taxonomy" id="349746"/>
    <lineage>
        <taxon>Bacteria</taxon>
        <taxon>Pseudomonadati</taxon>
        <taxon>Pseudomonadota</taxon>
        <taxon>Gammaproteobacteria</taxon>
        <taxon>Enterobacterales</taxon>
        <taxon>Yersiniaceae</taxon>
        <taxon>Yersinia</taxon>
    </lineage>
</organism>
<reference key="1">
    <citation type="journal article" date="2010" name="J. Bacteriol.">
        <title>Genome sequence of the deep-rooted Yersinia pestis strain Angola reveals new insights into the evolution and pangenome of the plague bacterium.</title>
        <authorList>
            <person name="Eppinger M."/>
            <person name="Worsham P.L."/>
            <person name="Nikolich M.P."/>
            <person name="Riley D.R."/>
            <person name="Sebastian Y."/>
            <person name="Mou S."/>
            <person name="Achtman M."/>
            <person name="Lindler L.E."/>
            <person name="Ravel J."/>
        </authorList>
    </citation>
    <scope>NUCLEOTIDE SEQUENCE [LARGE SCALE GENOMIC DNA]</scope>
    <source>
        <strain>Angola</strain>
    </source>
</reference>
<keyword id="KW-0093">Biotin biosynthesis</keyword>
<keyword id="KW-0663">Pyridoxal phosphate</keyword>
<keyword id="KW-0808">Transferase</keyword>